<reference key="1">
    <citation type="journal article" date="2009" name="Vaccine">
        <title>Whole genome sequence analysis of Mycobacterium bovis bacillus Calmette-Guerin (BCG) Tokyo 172: a comparative study of BCG vaccine substrains.</title>
        <authorList>
            <person name="Seki M."/>
            <person name="Honda I."/>
            <person name="Fujita I."/>
            <person name="Yano I."/>
            <person name="Yamamoto S."/>
            <person name="Koyama A."/>
        </authorList>
    </citation>
    <scope>NUCLEOTIDE SEQUENCE [LARGE SCALE GENOMIC DNA]</scope>
    <source>
        <strain>BCG / Tokyo 172 / ATCC 35737 / TMC 1019</strain>
    </source>
</reference>
<name>FRDD_MYCBT</name>
<dbReference type="EMBL" id="AP010918">
    <property type="protein sequence ID" value="BAH25869.1"/>
    <property type="molecule type" value="Genomic_DNA"/>
</dbReference>
<dbReference type="RefSeq" id="WP_003407771.1">
    <property type="nucleotide sequence ID" value="NZ_CP014566.1"/>
</dbReference>
<dbReference type="SMR" id="C1ANJ0"/>
<dbReference type="KEGG" id="mbt:JTY_1581"/>
<dbReference type="HOGENOM" id="CLU_168367_0_0_11"/>
<dbReference type="GO" id="GO:0045283">
    <property type="term" value="C:fumarate reductase complex"/>
    <property type="evidence" value="ECO:0007669"/>
    <property type="project" value="UniProtKB-UniRule"/>
</dbReference>
<dbReference type="GO" id="GO:0005886">
    <property type="term" value="C:plasma membrane"/>
    <property type="evidence" value="ECO:0007669"/>
    <property type="project" value="UniProtKB-SubCell"/>
</dbReference>
<dbReference type="GO" id="GO:0000104">
    <property type="term" value="F:succinate dehydrogenase activity"/>
    <property type="evidence" value="ECO:0007669"/>
    <property type="project" value="UniProtKB-UniRule"/>
</dbReference>
<dbReference type="GO" id="GO:0006106">
    <property type="term" value="P:fumarate metabolic process"/>
    <property type="evidence" value="ECO:0007669"/>
    <property type="project" value="InterPro"/>
</dbReference>
<dbReference type="Gene3D" id="1.20.1300.10">
    <property type="entry name" value="Fumarate reductase/succinate dehydrogenase, transmembrane subunit"/>
    <property type="match status" value="1"/>
</dbReference>
<dbReference type="HAMAP" id="MF_00709">
    <property type="entry name" value="Fumarate_red_D"/>
    <property type="match status" value="1"/>
</dbReference>
<dbReference type="InterPro" id="IPR003418">
    <property type="entry name" value="Fumarate_red_D"/>
</dbReference>
<dbReference type="InterPro" id="IPR034804">
    <property type="entry name" value="SQR/QFR_C/D"/>
</dbReference>
<dbReference type="NCBIfam" id="NF003977">
    <property type="entry name" value="PRK05470.1-1"/>
    <property type="match status" value="1"/>
</dbReference>
<dbReference type="Pfam" id="PF02313">
    <property type="entry name" value="Fumarate_red_D"/>
    <property type="match status" value="1"/>
</dbReference>
<dbReference type="PIRSF" id="PIRSF000179">
    <property type="entry name" value="FrdD"/>
    <property type="match status" value="1"/>
</dbReference>
<dbReference type="SUPFAM" id="SSF81343">
    <property type="entry name" value="Fumarate reductase respiratory complex transmembrane subunits"/>
    <property type="match status" value="1"/>
</dbReference>
<accession>C1ANJ0</accession>
<gene>
    <name evidence="1" type="primary">frdD</name>
    <name type="ordered locus">JTY_1581</name>
</gene>
<sequence length="125" mass="13754">MTPSTSDARSRRRSAEPFLWLLFSAGGMVTALVAPVLLLLFGLAFPLGWLDAPDHGHLLAMVRNPITKLVVLVLVVLALFHAAHRFRFVLDHGLQLGRFDRVIALWCYGMAVLGSATAGWMLLTM</sequence>
<proteinExistence type="inferred from homology"/>
<evidence type="ECO:0000255" key="1">
    <source>
        <dbReference type="HAMAP-Rule" id="MF_00709"/>
    </source>
</evidence>
<feature type="chain" id="PRO_1000147957" description="Fumarate reductase subunit D">
    <location>
        <begin position="1"/>
        <end position="125"/>
    </location>
</feature>
<feature type="transmembrane region" description="Helical" evidence="1">
    <location>
        <begin position="29"/>
        <end position="49"/>
    </location>
</feature>
<feature type="transmembrane region" description="Helical" evidence="1">
    <location>
        <begin position="64"/>
        <end position="84"/>
    </location>
</feature>
<feature type="transmembrane region" description="Helical" evidence="1">
    <location>
        <begin position="102"/>
        <end position="122"/>
    </location>
</feature>
<protein>
    <recommendedName>
        <fullName evidence="1">Fumarate reductase subunit D</fullName>
    </recommendedName>
    <alternativeName>
        <fullName evidence="1">Quinol-fumarate reductase subunit D</fullName>
        <shortName evidence="1">QFR subunit D</shortName>
    </alternativeName>
</protein>
<organism>
    <name type="scientific">Mycobacterium bovis (strain BCG / Tokyo 172 / ATCC 35737 / TMC 1019)</name>
    <dbReference type="NCBI Taxonomy" id="561275"/>
    <lineage>
        <taxon>Bacteria</taxon>
        <taxon>Bacillati</taxon>
        <taxon>Actinomycetota</taxon>
        <taxon>Actinomycetes</taxon>
        <taxon>Mycobacteriales</taxon>
        <taxon>Mycobacteriaceae</taxon>
        <taxon>Mycobacterium</taxon>
        <taxon>Mycobacterium tuberculosis complex</taxon>
    </lineage>
</organism>
<comment type="function">
    <text evidence="1">Anchors the catalytic components of the fumarate reductase complex to the cell membrane, binds quinones.</text>
</comment>
<comment type="subunit">
    <text evidence="1">Part of an enzyme complex containing four subunits: a flavoprotein (FrdA), an iron-sulfur protein (FrdB), and two hydrophobic anchor proteins (FrdC and FrdD).</text>
</comment>
<comment type="subcellular location">
    <subcellularLocation>
        <location evidence="1">Cell membrane</location>
        <topology evidence="1">Multi-pass membrane protein</topology>
    </subcellularLocation>
</comment>
<comment type="similarity">
    <text evidence="1">Belongs to the FrdD family.</text>
</comment>
<keyword id="KW-1003">Cell membrane</keyword>
<keyword id="KW-0472">Membrane</keyword>
<keyword id="KW-0812">Transmembrane</keyword>
<keyword id="KW-1133">Transmembrane helix</keyword>